<accession>Q91754</accession>
<accession>Q6PAX3</accession>
<sequence length="619" mass="68739">MRGTRKYQHVIETPDPGKWELAGYEESLPISEKSNPMTRELDKADPSQLVQLLRDCDAEIFQEEDENLIHYHRLYSESVLKTMGDVAKRVQEVLKNPDDSLVVLSGCGTSGRLALLLANSFNGLLKGLHKTPCYCYIMSGGDRSIVTSQESSEDNPQLGAQELEKVCEGKKNVLFIGISCGLSAPFIAGQLDFCMRHLDVYLPVLVGFNPVSMARNERIEGWHSSFRQVAERLQTLHDSQKGFILNPAVGPEGVSGSSRMKGGSATKILLETLLLVAHKAESNVPVTEKCLLEILRTYERAHKVTYSQSKKIAALMKQTATSLQKKGHLYILGWGTLGLVGIMDAVECVPTYQADWRDVRGFITGGYHSIENKEGDLSSLGPQFSISHEDFVKNVLPSVSETDTVLLIFTLDDDLNQIEKLVALVKEKTSNIQVICHATAGQYLPNSLKKTIPSIIGLTWPILFLEYEGAFIQKFQRELSTKWILDTVTSGAYTLRGKIFRNFMVDFKINNSKLFHRATSVLQRLTGQSHQRCTEVLLQSIYGEQTLSEQIRNTTIAGHVEAAASQDKVLPVAIVSLLRSCTIQDSRSRINSSLSIRSAIESSMNVPGRKRGAEDSESR</sequence>
<organism>
    <name type="scientific">Xenopus laevis</name>
    <name type="common">African clawed frog</name>
    <dbReference type="NCBI Taxonomy" id="8355"/>
    <lineage>
        <taxon>Eukaryota</taxon>
        <taxon>Metazoa</taxon>
        <taxon>Chordata</taxon>
        <taxon>Craniata</taxon>
        <taxon>Vertebrata</taxon>
        <taxon>Euteleostomi</taxon>
        <taxon>Amphibia</taxon>
        <taxon>Batrachia</taxon>
        <taxon>Anura</taxon>
        <taxon>Pipoidea</taxon>
        <taxon>Pipidae</taxon>
        <taxon>Xenopodinae</taxon>
        <taxon>Xenopus</taxon>
        <taxon>Xenopus</taxon>
    </lineage>
</organism>
<dbReference type="EMBL" id="X80901">
    <property type="protein sequence ID" value="CAA56863.1"/>
    <property type="molecule type" value="mRNA"/>
</dbReference>
<dbReference type="EMBL" id="BC060011">
    <property type="protein sequence ID" value="AAH60011.1"/>
    <property type="molecule type" value="mRNA"/>
</dbReference>
<dbReference type="PIR" id="S48729">
    <property type="entry name" value="S48729"/>
</dbReference>
<dbReference type="RefSeq" id="NP_001083276.1">
    <property type="nucleotide sequence ID" value="NM_001089807.1"/>
</dbReference>
<dbReference type="PDB" id="3W0L">
    <property type="method" value="X-ray"/>
    <property type="resolution" value="2.92 A"/>
    <property type="chains" value="B/D=1-619"/>
</dbReference>
<dbReference type="PDBsum" id="3W0L"/>
<dbReference type="SMR" id="Q91754"/>
<dbReference type="GeneID" id="398839"/>
<dbReference type="KEGG" id="xla:398839"/>
<dbReference type="AGR" id="Xenbase:XB-GENE-6255160"/>
<dbReference type="CTD" id="398839"/>
<dbReference type="Xenbase" id="XB-GENE-6255160">
    <property type="gene designation" value="gckr.L"/>
</dbReference>
<dbReference type="OrthoDB" id="311172at2759"/>
<dbReference type="EvolutionaryTrace" id="Q91754"/>
<dbReference type="Proteomes" id="UP000186698">
    <property type="component" value="Chromosome 5L"/>
</dbReference>
<dbReference type="Bgee" id="398839">
    <property type="expression patterns" value="Expressed in kidney and 7 other cell types or tissues"/>
</dbReference>
<dbReference type="GO" id="GO:0005737">
    <property type="term" value="C:cytoplasm"/>
    <property type="evidence" value="ECO:0000250"/>
    <property type="project" value="UniProtKB"/>
</dbReference>
<dbReference type="GO" id="GO:0005829">
    <property type="term" value="C:cytosol"/>
    <property type="evidence" value="ECO:0007669"/>
    <property type="project" value="TreeGrafter"/>
</dbReference>
<dbReference type="GO" id="GO:0005739">
    <property type="term" value="C:mitochondrion"/>
    <property type="evidence" value="ECO:0007669"/>
    <property type="project" value="UniProtKB-SubCell"/>
</dbReference>
<dbReference type="GO" id="GO:0005654">
    <property type="term" value="C:nucleoplasm"/>
    <property type="evidence" value="ECO:0000250"/>
    <property type="project" value="UniProtKB"/>
</dbReference>
<dbReference type="GO" id="GO:0030246">
    <property type="term" value="F:carbohydrate binding"/>
    <property type="evidence" value="ECO:0007669"/>
    <property type="project" value="TreeGrafter"/>
</dbReference>
<dbReference type="GO" id="GO:0019899">
    <property type="term" value="F:enzyme binding"/>
    <property type="evidence" value="ECO:0007669"/>
    <property type="project" value="TreeGrafter"/>
</dbReference>
<dbReference type="GO" id="GO:0070095">
    <property type="term" value="F:fructose-6-phosphate binding"/>
    <property type="evidence" value="ECO:0000250"/>
    <property type="project" value="UniProtKB"/>
</dbReference>
<dbReference type="GO" id="GO:0141089">
    <property type="term" value="F:glucose sensor activity"/>
    <property type="evidence" value="ECO:0000318"/>
    <property type="project" value="GO_Central"/>
</dbReference>
<dbReference type="GO" id="GO:0019210">
    <property type="term" value="F:kinase inhibitor activity"/>
    <property type="evidence" value="ECO:0000318"/>
    <property type="project" value="GO_Central"/>
</dbReference>
<dbReference type="GO" id="GO:1901135">
    <property type="term" value="P:carbohydrate derivative metabolic process"/>
    <property type="evidence" value="ECO:0007669"/>
    <property type="project" value="InterPro"/>
</dbReference>
<dbReference type="GO" id="GO:0001678">
    <property type="term" value="P:intracellular glucose homeostasis"/>
    <property type="evidence" value="ECO:0000318"/>
    <property type="project" value="GO_Central"/>
</dbReference>
<dbReference type="GO" id="GO:0033132">
    <property type="term" value="P:negative regulation of glucokinase activity"/>
    <property type="evidence" value="ECO:0000250"/>
    <property type="project" value="UniProtKB"/>
</dbReference>
<dbReference type="GO" id="GO:0034504">
    <property type="term" value="P:protein localization to nucleus"/>
    <property type="evidence" value="ECO:0000318"/>
    <property type="project" value="GO_Central"/>
</dbReference>
<dbReference type="GO" id="GO:0009750">
    <property type="term" value="P:response to fructose"/>
    <property type="evidence" value="ECO:0007669"/>
    <property type="project" value="TreeGrafter"/>
</dbReference>
<dbReference type="FunFam" id="1.10.8.1080:FF:000002">
    <property type="entry name" value="Glucokinase regulatory protein"/>
    <property type="match status" value="1"/>
</dbReference>
<dbReference type="FunFam" id="3.40.50.10490:FF:000033">
    <property type="entry name" value="Glucokinase regulatory protein"/>
    <property type="match status" value="1"/>
</dbReference>
<dbReference type="FunFam" id="3.40.50.12620:FF:000001">
    <property type="entry name" value="Glucokinase regulatory protein"/>
    <property type="match status" value="1"/>
</dbReference>
<dbReference type="Gene3D" id="1.10.8.1080">
    <property type="match status" value="1"/>
</dbReference>
<dbReference type="Gene3D" id="3.40.50.12620">
    <property type="match status" value="1"/>
</dbReference>
<dbReference type="Gene3D" id="3.40.50.10490">
    <property type="entry name" value="Glucose-6-phosphate isomerase like protein, domain 1"/>
    <property type="match status" value="1"/>
</dbReference>
<dbReference type="InterPro" id="IPR054017">
    <property type="entry name" value="GKRP_SIS_2"/>
</dbReference>
<dbReference type="InterPro" id="IPR005486">
    <property type="entry name" value="Glucokinase_regulatory_CS"/>
</dbReference>
<dbReference type="InterPro" id="IPR040190">
    <property type="entry name" value="MURQ/GCKR"/>
</dbReference>
<dbReference type="InterPro" id="IPR001347">
    <property type="entry name" value="SIS_dom"/>
</dbReference>
<dbReference type="InterPro" id="IPR046348">
    <property type="entry name" value="SIS_dom_sf"/>
</dbReference>
<dbReference type="PANTHER" id="PTHR10088">
    <property type="entry name" value="GLUCOKINASE REGULATORY PROTEIN"/>
    <property type="match status" value="1"/>
</dbReference>
<dbReference type="PANTHER" id="PTHR10088:SF4">
    <property type="entry name" value="GLUCOKINASE REGULATORY PROTEIN"/>
    <property type="match status" value="1"/>
</dbReference>
<dbReference type="Pfam" id="PF20741">
    <property type="entry name" value="GKRP-like_C"/>
    <property type="match status" value="1"/>
</dbReference>
<dbReference type="Pfam" id="PF22198">
    <property type="entry name" value="GKRP_SIS_2"/>
    <property type="match status" value="1"/>
</dbReference>
<dbReference type="Pfam" id="PF22645">
    <property type="entry name" value="GKRP_SIS_N"/>
    <property type="match status" value="1"/>
</dbReference>
<dbReference type="SUPFAM" id="SSF53697">
    <property type="entry name" value="SIS domain"/>
    <property type="match status" value="2"/>
</dbReference>
<dbReference type="PROSITE" id="PS01272">
    <property type="entry name" value="GCKR"/>
    <property type="match status" value="1"/>
</dbReference>
<dbReference type="PROSITE" id="PS51464">
    <property type="entry name" value="SIS"/>
    <property type="match status" value="2"/>
</dbReference>
<protein>
    <recommendedName>
        <fullName evidence="6">Glucokinase regulatory protein</fullName>
        <shortName evidence="5">GKRP</shortName>
        <shortName evidence="2">Glucokinase regulator</shortName>
    </recommendedName>
</protein>
<gene>
    <name evidence="2" type="primary">gckr</name>
</gene>
<feature type="chain" id="PRO_0000214828" description="Glucokinase regulatory protein">
    <location>
        <begin position="1"/>
        <end position="619"/>
    </location>
</feature>
<feature type="domain" description="SIS 1" evidence="3">
    <location>
        <begin position="90"/>
        <end position="283"/>
    </location>
</feature>
<feature type="domain" description="SIS 2" evidence="3">
    <location>
        <begin position="319"/>
        <end position="498"/>
    </location>
</feature>
<feature type="region of interest" description="Essential for interaction with GCK" evidence="4">
    <location>
        <begin position="462"/>
        <end position="464"/>
    </location>
</feature>
<feature type="binding site" evidence="4 8">
    <location>
        <begin position="107"/>
        <end position="109"/>
    </location>
    <ligand>
        <name>keto-D-fructose 6-phosphate</name>
        <dbReference type="ChEBI" id="CHEBI:57579"/>
    </ligand>
</feature>
<feature type="binding site" evidence="2">
    <location>
        <begin position="109"/>
        <end position="110"/>
    </location>
    <ligand>
        <name>beta-D-fructose 1-phosphate</name>
        <dbReference type="ChEBI" id="CHEBI:138881"/>
    </ligand>
</feature>
<feature type="binding site" evidence="2">
    <location>
        <position position="153"/>
    </location>
    <ligand>
        <name>beta-D-fructose 1-phosphate</name>
        <dbReference type="ChEBI" id="CHEBI:138881"/>
    </ligand>
</feature>
<feature type="binding site" evidence="4 8">
    <location>
        <begin position="179"/>
        <end position="183"/>
    </location>
    <ligand>
        <name>keto-D-fructose 6-phosphate</name>
        <dbReference type="ChEBI" id="CHEBI:57579"/>
    </ligand>
</feature>
<feature type="binding site" evidence="2">
    <location>
        <begin position="179"/>
        <end position="181"/>
    </location>
    <ligand>
        <name>beta-D-fructose 1-phosphate</name>
        <dbReference type="ChEBI" id="CHEBI:138881"/>
    </ligand>
</feature>
<feature type="binding site" evidence="2">
    <location>
        <position position="347"/>
    </location>
    <ligand>
        <name>beta-D-fructose 1-phosphate</name>
        <dbReference type="ChEBI" id="CHEBI:138881"/>
    </ligand>
</feature>
<feature type="binding site" evidence="4 8">
    <location>
        <position position="347"/>
    </location>
    <ligand>
        <name>keto-D-fructose 6-phosphate</name>
        <dbReference type="ChEBI" id="CHEBI:57579"/>
    </ligand>
</feature>
<feature type="binding site" evidence="2">
    <location>
        <position position="513"/>
    </location>
    <ligand>
        <name>beta-D-fructose 1-phosphate</name>
        <dbReference type="ChEBI" id="CHEBI:138881"/>
    </ligand>
</feature>
<feature type="binding site" evidence="4 8">
    <location>
        <position position="513"/>
    </location>
    <ligand>
        <name>keto-D-fructose 6-phosphate</name>
        <dbReference type="ChEBI" id="CHEBI:57579"/>
    </ligand>
</feature>
<feature type="sequence conflict" description="In Ref. 2; AAH60011." evidence="7" ref="2">
    <original>H</original>
    <variation>Q</variation>
    <location>
        <position position="530"/>
    </location>
</feature>
<feature type="helix" evidence="9">
    <location>
        <begin position="18"/>
        <end position="20"/>
    </location>
</feature>
<feature type="helix" evidence="9">
    <location>
        <begin position="30"/>
        <end position="32"/>
    </location>
</feature>
<feature type="helix" evidence="9">
    <location>
        <begin position="36"/>
        <end position="38"/>
    </location>
</feature>
<feature type="helix" evidence="9">
    <location>
        <begin position="46"/>
        <end position="58"/>
    </location>
</feature>
<feature type="helix" evidence="9">
    <location>
        <begin position="59"/>
        <end position="61"/>
    </location>
</feature>
<feature type="helix" evidence="9">
    <location>
        <begin position="66"/>
        <end position="68"/>
    </location>
</feature>
<feature type="helix" evidence="9">
    <location>
        <begin position="77"/>
        <end position="95"/>
    </location>
</feature>
<feature type="turn" evidence="9">
    <location>
        <begin position="97"/>
        <end position="99"/>
    </location>
</feature>
<feature type="strand" evidence="9">
    <location>
        <begin position="100"/>
        <end position="107"/>
    </location>
</feature>
<feature type="helix" evidence="9">
    <location>
        <begin position="109"/>
        <end position="127"/>
    </location>
</feature>
<feature type="strand" evidence="9">
    <location>
        <begin position="134"/>
        <end position="140"/>
    </location>
</feature>
<feature type="helix" evidence="9">
    <location>
        <begin position="142"/>
        <end position="145"/>
    </location>
</feature>
<feature type="helix" evidence="9">
    <location>
        <begin position="150"/>
        <end position="153"/>
    </location>
</feature>
<feature type="helix" evidence="9">
    <location>
        <begin position="156"/>
        <end position="166"/>
    </location>
</feature>
<feature type="turn" evidence="9">
    <location>
        <begin position="167"/>
        <end position="169"/>
    </location>
</feature>
<feature type="strand" evidence="9">
    <location>
        <begin position="171"/>
        <end position="178"/>
    </location>
</feature>
<feature type="helix" evidence="9">
    <location>
        <begin position="185"/>
        <end position="195"/>
    </location>
</feature>
<feature type="turn" evidence="9">
    <location>
        <begin position="198"/>
        <end position="200"/>
    </location>
</feature>
<feature type="strand" evidence="9">
    <location>
        <begin position="201"/>
        <end position="206"/>
    </location>
</feature>
<feature type="helix" evidence="9">
    <location>
        <begin position="211"/>
        <end position="213"/>
    </location>
</feature>
<feature type="helix" evidence="9">
    <location>
        <begin position="226"/>
        <end position="238"/>
    </location>
</feature>
<feature type="strand" evidence="9">
    <location>
        <begin position="241"/>
        <end position="245"/>
    </location>
</feature>
<feature type="strand" evidence="9">
    <location>
        <begin position="253"/>
        <end position="255"/>
    </location>
</feature>
<feature type="turn" evidence="9">
    <location>
        <begin position="258"/>
        <end position="260"/>
    </location>
</feature>
<feature type="helix" evidence="9">
    <location>
        <begin position="261"/>
        <end position="279"/>
    </location>
</feature>
<feature type="helix" evidence="9">
    <location>
        <begin position="288"/>
        <end position="305"/>
    </location>
</feature>
<feature type="helix" evidence="9">
    <location>
        <begin position="306"/>
        <end position="308"/>
    </location>
</feature>
<feature type="helix" evidence="9">
    <location>
        <begin position="309"/>
        <end position="324"/>
    </location>
</feature>
<feature type="strand" evidence="9">
    <location>
        <begin position="329"/>
        <end position="334"/>
    </location>
</feature>
<feature type="helix" evidence="9">
    <location>
        <begin position="336"/>
        <end position="345"/>
    </location>
</feature>
<feature type="helix" evidence="9">
    <location>
        <begin position="348"/>
        <end position="351"/>
    </location>
</feature>
<feature type="turn" evidence="9">
    <location>
        <begin position="356"/>
        <end position="358"/>
    </location>
</feature>
<feature type="strand" evidence="9">
    <location>
        <begin position="359"/>
        <end position="364"/>
    </location>
</feature>
<feature type="helix" evidence="9">
    <location>
        <begin position="367"/>
        <end position="370"/>
    </location>
</feature>
<feature type="helix" evidence="9">
    <location>
        <begin position="378"/>
        <end position="380"/>
    </location>
</feature>
<feature type="helix" evidence="9">
    <location>
        <begin position="382"/>
        <end position="384"/>
    </location>
</feature>
<feature type="helix" evidence="9">
    <location>
        <begin position="388"/>
        <end position="393"/>
    </location>
</feature>
<feature type="helix" evidence="9">
    <location>
        <begin position="396"/>
        <end position="398"/>
    </location>
</feature>
<feature type="strand" evidence="9">
    <location>
        <begin position="404"/>
        <end position="410"/>
    </location>
</feature>
<feature type="helix" evidence="9">
    <location>
        <begin position="415"/>
        <end position="428"/>
    </location>
</feature>
<feature type="strand" evidence="9">
    <location>
        <begin position="432"/>
        <end position="439"/>
    </location>
</feature>
<feature type="helix" evidence="9">
    <location>
        <begin position="446"/>
        <end position="451"/>
    </location>
</feature>
<feature type="strand" evidence="9">
    <location>
        <begin position="452"/>
        <end position="460"/>
    </location>
</feature>
<feature type="helix" evidence="9">
    <location>
        <begin position="466"/>
        <end position="468"/>
    </location>
</feature>
<feature type="helix" evidence="9">
    <location>
        <begin position="469"/>
        <end position="495"/>
    </location>
</feature>
<feature type="strand" evidence="9">
    <location>
        <begin position="500"/>
        <end position="503"/>
    </location>
</feature>
<feature type="helix" evidence="9">
    <location>
        <begin position="512"/>
        <end position="525"/>
    </location>
</feature>
<feature type="helix" evidence="9">
    <location>
        <begin position="530"/>
        <end position="542"/>
    </location>
</feature>
<feature type="turn" evidence="9">
    <location>
        <begin position="550"/>
        <end position="553"/>
    </location>
</feature>
<feature type="helix" evidence="9">
    <location>
        <begin position="556"/>
        <end position="563"/>
    </location>
</feature>
<feature type="helix" evidence="9">
    <location>
        <begin position="569"/>
        <end position="578"/>
    </location>
</feature>
<feature type="helix" evidence="9">
    <location>
        <begin position="583"/>
        <end position="591"/>
    </location>
</feature>
<feature type="helix" evidence="9">
    <location>
        <begin position="596"/>
        <end position="604"/>
    </location>
</feature>
<reference key="1">
    <citation type="journal article" date="1994" name="Eur. J. Biochem.">
        <title>Cloning and expression of a Xenopus liver cDNA encoding a fructose-phosphate-insensitive regulatory protein of glucokinase.</title>
        <authorList>
            <person name="Veiga-Da-Cunha M."/>
            <person name="Detheux M."/>
            <person name="Watelet N."/>
            <person name="van Schaftingen E."/>
        </authorList>
    </citation>
    <scope>NUCLEOTIDE SEQUENCE [MRNA]</scope>
    <source>
        <tissue>Liver</tissue>
    </source>
</reference>
<reference key="2">
    <citation type="submission" date="2003-10" db="EMBL/GenBank/DDBJ databases">
        <authorList>
            <consortium name="NIH - Xenopus Gene Collection (XGC) project"/>
        </authorList>
    </citation>
    <scope>NUCLEOTIDE SEQUENCE [LARGE SCALE MRNA]</scope>
    <source>
        <tissue>Kidney</tissue>
    </source>
</reference>
<reference evidence="8" key="3">
    <citation type="journal article" date="2013" name="Proc. Natl. Acad. Sci. U.S.A.">
        <title>Molecular basis for the role of glucokinase regulatory protein as the allosteric switch for glucokinase.</title>
        <authorList>
            <person name="Choi J.M."/>
            <person name="Seo M.H."/>
            <person name="Kyeong H.H."/>
            <person name="Kim E."/>
            <person name="Kim H.S."/>
        </authorList>
    </citation>
    <scope>X-RAY CRYSTALLOGRAPHY (2.92 ANGSTROMS) IN COMPLEX WITH GCK AND KETO-D-FRUCTOSE 6-PHOSPHATE</scope>
    <scope>FUNCTION</scope>
    <scope>INTERACTION WITH GCK</scope>
</reference>
<proteinExistence type="evidence at protein level"/>
<evidence type="ECO:0000250" key="1">
    <source>
        <dbReference type="UniProtKB" id="Q07071"/>
    </source>
</evidence>
<evidence type="ECO:0000250" key="2">
    <source>
        <dbReference type="UniProtKB" id="Q14397"/>
    </source>
</evidence>
<evidence type="ECO:0000255" key="3">
    <source>
        <dbReference type="PROSITE-ProRule" id="PRU00797"/>
    </source>
</evidence>
<evidence type="ECO:0000269" key="4">
    <source>
    </source>
</evidence>
<evidence type="ECO:0000303" key="5">
    <source>
    </source>
</evidence>
<evidence type="ECO:0000303" key="6">
    <source>
    </source>
</evidence>
<evidence type="ECO:0000305" key="7"/>
<evidence type="ECO:0007744" key="8">
    <source>
        <dbReference type="PDB" id="3W0L"/>
    </source>
</evidence>
<evidence type="ECO:0007829" key="9">
    <source>
        <dbReference type="PDB" id="3W0L"/>
    </source>
</evidence>
<comment type="function">
    <text evidence="4">Regulates glucokinase (gck) by forming an inactive complex with this enzyme (PubMed:23733961). The affinity of gckr for gck is modulated by fructose metabolites: gckr with bound fructose 6-phosphate has increased affinity for gck, while gckr with bound fructose 1-phosphate has strongly decreased affinity for gck and does not inhibit gck activity (PubMed:23733961).</text>
</comment>
<comment type="subunit">
    <text evidence="4">Interacts (fructose 6-phosphate bound form) with gck.</text>
</comment>
<comment type="subcellular location">
    <subcellularLocation>
        <location evidence="2">Nucleus</location>
    </subcellularLocation>
    <subcellularLocation>
        <location evidence="2">Cytoplasm</location>
    </subcellularLocation>
    <subcellularLocation>
        <location evidence="1">Mitochondrion</location>
    </subcellularLocation>
</comment>
<comment type="domain">
    <text evidence="4">Fructose 1-phosphate and fructose 6-phosphate compete for the same binding site.</text>
</comment>
<comment type="similarity">
    <text evidence="7">Belongs to the GCKR family.</text>
</comment>
<name>GCKR_XENLA</name>
<keyword id="KW-0002">3D-structure</keyword>
<keyword id="KW-0119">Carbohydrate metabolism</keyword>
<keyword id="KW-0963">Cytoplasm</keyword>
<keyword id="KW-0496">Mitochondrion</keyword>
<keyword id="KW-0539">Nucleus</keyword>
<keyword id="KW-1185">Reference proteome</keyword>
<keyword id="KW-0677">Repeat</keyword>